<name>TADA2_ORYSJ</name>
<comment type="function">
    <text evidence="1 6">Required for the function of some acidic activation domains, which activate transcription from a distant site (By similarity). The exact mechanism of action is not yet known (By similarity). ADA2 and GCN5 function to acetylate nucleosomes, opening up the promoter region (PubMed:28487409). The ADA2-GCN5 histone acetyltransferase (HAT) module is recruited by WOX11 to regulate crown root cell proliferation and stem cell maintenance of root meristem (PubMed:28487409). The ADA2-GCN5 HAT module together with WOX11 targets and regulates a set of root-specific genes involved in carbon metabolism, cell wall biosynthesis, and auxin transport and response (PubMed:28487409).</text>
</comment>
<comment type="subunit">
    <text evidence="6">Interacts with GCN5 and WOX11 (via N-terminus).</text>
</comment>
<comment type="subcellular location">
    <subcellularLocation>
        <location evidence="6">Nucleus</location>
    </subcellularLocation>
</comment>
<comment type="tissue specificity">
    <text evidence="6">Expressed in roots, mature leaves, stems and panicles.</text>
</comment>
<comment type="sequence caution" evidence="7">
    <conflict type="erroneous gene model prediction">
        <sequence resource="EMBL-CDS" id="AAR87248"/>
    </conflict>
</comment>
<comment type="sequence caution" evidence="7">
    <conflict type="erroneous gene model prediction">
        <sequence resource="EMBL-CDS" id="ABF98901"/>
    </conflict>
</comment>
<accession>Q75LL6</accession>
<accession>B7EL06</accession>
<accession>Q10CS4</accession>
<dbReference type="EMBL" id="AC092556">
    <property type="protein sequence ID" value="AAR87248.1"/>
    <property type="status" value="ALT_SEQ"/>
    <property type="molecule type" value="Genomic_DNA"/>
</dbReference>
<dbReference type="EMBL" id="DP000009">
    <property type="protein sequence ID" value="ABF98900.1"/>
    <property type="molecule type" value="Genomic_DNA"/>
</dbReference>
<dbReference type="EMBL" id="DP000009">
    <property type="protein sequence ID" value="ABF98901.1"/>
    <property type="status" value="ALT_SEQ"/>
    <property type="molecule type" value="Genomic_DNA"/>
</dbReference>
<dbReference type="EMBL" id="AP008209">
    <property type="protein sequence ID" value="BAF13201.1"/>
    <property type="molecule type" value="Genomic_DNA"/>
</dbReference>
<dbReference type="EMBL" id="AP014959">
    <property type="protein sequence ID" value="BAS86407.1"/>
    <property type="molecule type" value="Genomic_DNA"/>
</dbReference>
<dbReference type="EMBL" id="AK072597">
    <property type="protein sequence ID" value="BAG93053.1"/>
    <property type="molecule type" value="mRNA"/>
</dbReference>
<dbReference type="RefSeq" id="XP_015631988.1">
    <property type="nucleotide sequence ID" value="XM_015776502.1"/>
</dbReference>
<dbReference type="SMR" id="Q75LL6"/>
<dbReference type="FunCoup" id="Q75LL6">
    <property type="interactions" value="2775"/>
</dbReference>
<dbReference type="STRING" id="39947.Q75LL6"/>
<dbReference type="PaxDb" id="39947-Q75LL6"/>
<dbReference type="EnsemblPlants" id="Os03t0750800-01">
    <property type="protein sequence ID" value="Os03t0750800-01"/>
    <property type="gene ID" value="Os03g0750800"/>
</dbReference>
<dbReference type="Gramene" id="Os03t0750800-01">
    <property type="protein sequence ID" value="Os03t0750800-01"/>
    <property type="gene ID" value="Os03g0750800"/>
</dbReference>
<dbReference type="KEGG" id="dosa:Os03g0750800"/>
<dbReference type="eggNOG" id="KOG0457">
    <property type="taxonomic scope" value="Eukaryota"/>
</dbReference>
<dbReference type="HOGENOM" id="CLU_018273_3_1_1"/>
<dbReference type="InParanoid" id="Q75LL6"/>
<dbReference type="OMA" id="YNGNHRP"/>
<dbReference type="OrthoDB" id="270417at2759"/>
<dbReference type="Proteomes" id="UP000000763">
    <property type="component" value="Chromosome 3"/>
</dbReference>
<dbReference type="Proteomes" id="UP000059680">
    <property type="component" value="Chromosome 3"/>
</dbReference>
<dbReference type="ExpressionAtlas" id="Q75LL6">
    <property type="expression patterns" value="baseline and differential"/>
</dbReference>
<dbReference type="GO" id="GO:0005634">
    <property type="term" value="C:nucleus"/>
    <property type="evidence" value="ECO:0000314"/>
    <property type="project" value="UniProtKB"/>
</dbReference>
<dbReference type="GO" id="GO:0003682">
    <property type="term" value="F:chromatin binding"/>
    <property type="evidence" value="ECO:0000318"/>
    <property type="project" value="GO_Central"/>
</dbReference>
<dbReference type="GO" id="GO:0003677">
    <property type="term" value="F:DNA binding"/>
    <property type="evidence" value="ECO:0007669"/>
    <property type="project" value="UniProtKB-KW"/>
</dbReference>
<dbReference type="GO" id="GO:0003713">
    <property type="term" value="F:transcription coactivator activity"/>
    <property type="evidence" value="ECO:0000314"/>
    <property type="project" value="UniProtKB"/>
</dbReference>
<dbReference type="GO" id="GO:0008270">
    <property type="term" value="F:zinc ion binding"/>
    <property type="evidence" value="ECO:0007669"/>
    <property type="project" value="UniProtKB-KW"/>
</dbReference>
<dbReference type="GO" id="GO:0006338">
    <property type="term" value="P:chromatin remodeling"/>
    <property type="evidence" value="ECO:0000318"/>
    <property type="project" value="GO_Central"/>
</dbReference>
<dbReference type="GO" id="GO:0006357">
    <property type="term" value="P:regulation of transcription by RNA polymerase II"/>
    <property type="evidence" value="ECO:0000318"/>
    <property type="project" value="GO_Central"/>
</dbReference>
<dbReference type="CDD" id="cd00167">
    <property type="entry name" value="SANT"/>
    <property type="match status" value="1"/>
</dbReference>
<dbReference type="CDD" id="cd02335">
    <property type="entry name" value="ZZ_ADA2"/>
    <property type="match status" value="1"/>
</dbReference>
<dbReference type="FunFam" id="3.30.60.90:FF:000013">
    <property type="entry name" value="Transcriptional adapter"/>
    <property type="match status" value="1"/>
</dbReference>
<dbReference type="FunFam" id="1.10.10.10:FF:000087">
    <property type="entry name" value="Transcriptional adapter 2"/>
    <property type="match status" value="1"/>
</dbReference>
<dbReference type="FunFam" id="1.10.10.60:FF:000115">
    <property type="entry name" value="Transcriptional adapter 2"/>
    <property type="match status" value="1"/>
</dbReference>
<dbReference type="Gene3D" id="3.30.60.90">
    <property type="match status" value="1"/>
</dbReference>
<dbReference type="Gene3D" id="1.10.10.60">
    <property type="entry name" value="Homeodomain-like"/>
    <property type="match status" value="1"/>
</dbReference>
<dbReference type="Gene3D" id="1.10.10.10">
    <property type="entry name" value="Winged helix-like DNA-binding domain superfamily/Winged helix DNA-binding domain"/>
    <property type="match status" value="1"/>
</dbReference>
<dbReference type="InterPro" id="IPR041983">
    <property type="entry name" value="ADA2-like_ZZ"/>
</dbReference>
<dbReference type="InterPro" id="IPR016827">
    <property type="entry name" value="Ada2/TADA2"/>
</dbReference>
<dbReference type="InterPro" id="IPR009057">
    <property type="entry name" value="Homeodomain-like_sf"/>
</dbReference>
<dbReference type="InterPro" id="IPR017930">
    <property type="entry name" value="Myb_dom"/>
</dbReference>
<dbReference type="InterPro" id="IPR001005">
    <property type="entry name" value="SANT/Myb"/>
</dbReference>
<dbReference type="InterPro" id="IPR017884">
    <property type="entry name" value="SANT_dom"/>
</dbReference>
<dbReference type="InterPro" id="IPR055141">
    <property type="entry name" value="TADA2A_B-like_dom"/>
</dbReference>
<dbReference type="InterPro" id="IPR036388">
    <property type="entry name" value="WH-like_DNA-bd_sf"/>
</dbReference>
<dbReference type="InterPro" id="IPR000433">
    <property type="entry name" value="Znf_ZZ"/>
</dbReference>
<dbReference type="InterPro" id="IPR043145">
    <property type="entry name" value="Znf_ZZ_sf"/>
</dbReference>
<dbReference type="PANTHER" id="PTHR12374:SF20">
    <property type="entry name" value="TRANSCRIPTIONAL ADAPTER 2-ALPHA"/>
    <property type="match status" value="1"/>
</dbReference>
<dbReference type="PANTHER" id="PTHR12374">
    <property type="entry name" value="TRANSCRIPTIONAL ADAPTOR 2 ADA2 -RELATED"/>
    <property type="match status" value="1"/>
</dbReference>
<dbReference type="Pfam" id="PF00249">
    <property type="entry name" value="Myb_DNA-binding"/>
    <property type="match status" value="1"/>
</dbReference>
<dbReference type="Pfam" id="PF22941">
    <property type="entry name" value="TADA2A-like_3rd"/>
    <property type="match status" value="1"/>
</dbReference>
<dbReference type="Pfam" id="PF25299">
    <property type="entry name" value="ZZ_ADA2"/>
    <property type="match status" value="1"/>
</dbReference>
<dbReference type="PIRSF" id="PIRSF025024">
    <property type="entry name" value="Transcriptional_adaptor_2"/>
    <property type="match status" value="1"/>
</dbReference>
<dbReference type="SMART" id="SM00717">
    <property type="entry name" value="SANT"/>
    <property type="match status" value="1"/>
</dbReference>
<dbReference type="SMART" id="SM00291">
    <property type="entry name" value="ZnF_ZZ"/>
    <property type="match status" value="1"/>
</dbReference>
<dbReference type="SUPFAM" id="SSF46689">
    <property type="entry name" value="Homeodomain-like"/>
    <property type="match status" value="2"/>
</dbReference>
<dbReference type="SUPFAM" id="SSF57850">
    <property type="entry name" value="RING/U-box"/>
    <property type="match status" value="1"/>
</dbReference>
<dbReference type="PROSITE" id="PS51293">
    <property type="entry name" value="SANT"/>
    <property type="match status" value="1"/>
</dbReference>
<dbReference type="PROSITE" id="PS01357">
    <property type="entry name" value="ZF_ZZ_1"/>
    <property type="match status" value="1"/>
</dbReference>
<dbReference type="PROSITE" id="PS50135">
    <property type="entry name" value="ZF_ZZ_2"/>
    <property type="match status" value="1"/>
</dbReference>
<proteinExistence type="evidence at protein level"/>
<protein>
    <recommendedName>
        <fullName>Transcriptional adapter ADA2</fullName>
    </recommendedName>
</protein>
<sequence>MGRSRGVPNSGDDETNHRSKRRRVASSGDAPDSLSAACGGAGEGGGKKALYHCNYCNKDISGKIRIKCSKCPDFDLCVECFSVGAEVTPHRSNHPYRVMDNLSFPLICPDWNADEEILLLEGIEMYGLGNWAEVAEHVGTKTKAQCIDHYTTAYMNSPCYPLPDMSHVNGKNRKELLAMAKVQGESKKVLPGDLTPKDESPFSPPRVKVEDALGEGLAGRSPSHIAGGANKKASNVGQFKDGANVAKVEDGHVDRSIGVKKPRYSADEGPSLTELSGYNSKRHEFDPEYDNDAEQALAEMEFKETDSETDRELKLRVLRIYLSRLDERKRRKEFILERNLLFPNPLEKDLTNEDKEVYHRYKVFMRFLSKEEHEALVRSVLEERKIRRRIQELQECRSAGCRTLAEAKIHIEQKRKKEHEVNAQKAKESGQLLSNTKVVHKTNRPMKIESDGNLDQKKGGASLDSTGRDSPKTTGHAGTKHWDDWDIVGFPGAELLSTSEKNLCCQNRLLPNHYLKMQEVLMQEIFKGSVAKKEDAHVLFKVDPAKVDNVYDMVTKKLGTNEEAPTV</sequence>
<evidence type="ECO:0000250" key="1">
    <source>
        <dbReference type="UniProtKB" id="Q03330"/>
    </source>
</evidence>
<evidence type="ECO:0000255" key="2"/>
<evidence type="ECO:0000255" key="3">
    <source>
        <dbReference type="PROSITE-ProRule" id="PRU00228"/>
    </source>
</evidence>
<evidence type="ECO:0000255" key="4">
    <source>
        <dbReference type="PROSITE-ProRule" id="PRU00624"/>
    </source>
</evidence>
<evidence type="ECO:0000256" key="5">
    <source>
        <dbReference type="SAM" id="MobiDB-lite"/>
    </source>
</evidence>
<evidence type="ECO:0000269" key="6">
    <source>
    </source>
</evidence>
<evidence type="ECO:0000305" key="7"/>
<keyword id="KW-0175">Coiled coil</keyword>
<keyword id="KW-0238">DNA-binding</keyword>
<keyword id="KW-0479">Metal-binding</keyword>
<keyword id="KW-0539">Nucleus</keyword>
<keyword id="KW-1185">Reference proteome</keyword>
<keyword id="KW-0804">Transcription</keyword>
<keyword id="KW-0805">Transcription regulation</keyword>
<keyword id="KW-0862">Zinc</keyword>
<keyword id="KW-0863">Zinc-finger</keyword>
<gene>
    <name type="primary">ADA2</name>
    <name type="ordered locus">Os03g0750800</name>
    <name type="ordered locus">LOC_Os03g53960</name>
    <name type="ORF">OSJNBa0047E24.21</name>
</gene>
<organism>
    <name type="scientific">Oryza sativa subsp. japonica</name>
    <name type="common">Rice</name>
    <dbReference type="NCBI Taxonomy" id="39947"/>
    <lineage>
        <taxon>Eukaryota</taxon>
        <taxon>Viridiplantae</taxon>
        <taxon>Streptophyta</taxon>
        <taxon>Embryophyta</taxon>
        <taxon>Tracheophyta</taxon>
        <taxon>Spermatophyta</taxon>
        <taxon>Magnoliopsida</taxon>
        <taxon>Liliopsida</taxon>
        <taxon>Poales</taxon>
        <taxon>Poaceae</taxon>
        <taxon>BOP clade</taxon>
        <taxon>Oryzoideae</taxon>
        <taxon>Oryzeae</taxon>
        <taxon>Oryzinae</taxon>
        <taxon>Oryza</taxon>
        <taxon>Oryza sativa</taxon>
    </lineage>
</organism>
<reference key="1">
    <citation type="journal article" date="2005" name="Genome Res.">
        <title>Sequence, annotation, and analysis of synteny between rice chromosome 3 and diverged grass species.</title>
        <authorList>
            <consortium name="The rice chromosome 3 sequencing consortium"/>
            <person name="Buell C.R."/>
            <person name="Yuan Q."/>
            <person name="Ouyang S."/>
            <person name="Liu J."/>
            <person name="Zhu W."/>
            <person name="Wang A."/>
            <person name="Maiti R."/>
            <person name="Haas B."/>
            <person name="Wortman J."/>
            <person name="Pertea M."/>
            <person name="Jones K.M."/>
            <person name="Kim M."/>
            <person name="Overton L."/>
            <person name="Tsitrin T."/>
            <person name="Fadrosh D."/>
            <person name="Bera J."/>
            <person name="Weaver B."/>
            <person name="Jin S."/>
            <person name="Johri S."/>
            <person name="Reardon M."/>
            <person name="Webb K."/>
            <person name="Hill J."/>
            <person name="Moffat K."/>
            <person name="Tallon L."/>
            <person name="Van Aken S."/>
            <person name="Lewis M."/>
            <person name="Utterback T."/>
            <person name="Feldblyum T."/>
            <person name="Zismann V."/>
            <person name="Iobst S."/>
            <person name="Hsiao J."/>
            <person name="de Vazeille A.R."/>
            <person name="Salzberg S.L."/>
            <person name="White O."/>
            <person name="Fraser C.M."/>
            <person name="Yu Y."/>
            <person name="Kim H."/>
            <person name="Rambo T."/>
            <person name="Currie J."/>
            <person name="Collura K."/>
            <person name="Kernodle-Thompson S."/>
            <person name="Wei F."/>
            <person name="Kudrna K."/>
            <person name="Ammiraju J.S.S."/>
            <person name="Luo M."/>
            <person name="Goicoechea J.L."/>
            <person name="Wing R.A."/>
            <person name="Henry D."/>
            <person name="Oates R."/>
            <person name="Palmer M."/>
            <person name="Pries G."/>
            <person name="Saski C."/>
            <person name="Simmons J."/>
            <person name="Soderlund C."/>
            <person name="Nelson W."/>
            <person name="de la Bastide M."/>
            <person name="Spiegel L."/>
            <person name="Nascimento L."/>
            <person name="Huang E."/>
            <person name="Preston R."/>
            <person name="Zutavern T."/>
            <person name="Palmer L."/>
            <person name="O'Shaughnessy A."/>
            <person name="Dike S."/>
            <person name="McCombie W.R."/>
            <person name="Minx P."/>
            <person name="Cordum H."/>
            <person name="Wilson R."/>
            <person name="Jin W."/>
            <person name="Lee H.R."/>
            <person name="Jiang J."/>
            <person name="Jackson S."/>
        </authorList>
    </citation>
    <scope>NUCLEOTIDE SEQUENCE [LARGE SCALE GENOMIC DNA]</scope>
    <source>
        <strain>cv. Nipponbare</strain>
    </source>
</reference>
<reference key="2">
    <citation type="journal article" date="2005" name="Nature">
        <title>The map-based sequence of the rice genome.</title>
        <authorList>
            <consortium name="International rice genome sequencing project (IRGSP)"/>
        </authorList>
    </citation>
    <scope>NUCLEOTIDE SEQUENCE [LARGE SCALE GENOMIC DNA]</scope>
    <source>
        <strain>cv. Nipponbare</strain>
    </source>
</reference>
<reference key="3">
    <citation type="journal article" date="2008" name="Nucleic Acids Res.">
        <title>The rice annotation project database (RAP-DB): 2008 update.</title>
        <authorList>
            <consortium name="The rice annotation project (RAP)"/>
        </authorList>
    </citation>
    <scope>GENOME REANNOTATION</scope>
    <source>
        <strain>cv. Nipponbare</strain>
    </source>
</reference>
<reference key="4">
    <citation type="journal article" date="2013" name="Rice">
        <title>Improvement of the Oryza sativa Nipponbare reference genome using next generation sequence and optical map data.</title>
        <authorList>
            <person name="Kawahara Y."/>
            <person name="de la Bastide M."/>
            <person name="Hamilton J.P."/>
            <person name="Kanamori H."/>
            <person name="McCombie W.R."/>
            <person name="Ouyang S."/>
            <person name="Schwartz D.C."/>
            <person name="Tanaka T."/>
            <person name="Wu J."/>
            <person name="Zhou S."/>
            <person name="Childs K.L."/>
            <person name="Davidson R.M."/>
            <person name="Lin H."/>
            <person name="Quesada-Ocampo L."/>
            <person name="Vaillancourt B."/>
            <person name="Sakai H."/>
            <person name="Lee S.S."/>
            <person name="Kim J."/>
            <person name="Numa H."/>
            <person name="Itoh T."/>
            <person name="Buell C.R."/>
            <person name="Matsumoto T."/>
        </authorList>
    </citation>
    <scope>GENOME REANNOTATION</scope>
    <source>
        <strain>cv. Nipponbare</strain>
    </source>
</reference>
<reference key="5">
    <citation type="journal article" date="2003" name="Science">
        <title>Collection, mapping, and annotation of over 28,000 cDNA clones from japonica rice.</title>
        <authorList>
            <consortium name="The rice full-length cDNA consortium"/>
        </authorList>
    </citation>
    <scope>NUCLEOTIDE SEQUENCE [LARGE SCALE MRNA]</scope>
    <source>
        <strain>cv. Nipponbare</strain>
    </source>
</reference>
<reference key="6">
    <citation type="journal article" date="2017" name="Plant Cell">
        <title>Rice homeodomain protein WOX11 recruits a histone acetyltransferase complex to establish programs of cell proliferation of crown root meristem.</title>
        <authorList>
            <person name="Zhou S."/>
            <person name="Jiang W."/>
            <person name="Long F."/>
            <person name="Cheng S."/>
            <person name="Yang W."/>
            <person name="Zhao Y."/>
            <person name="Zhou D.X."/>
        </authorList>
    </citation>
    <scope>FUNCTION</scope>
    <scope>INTERACTION WITH GCN5 AND WOX11</scope>
    <scope>SUBCELLULAR LOCATION</scope>
    <scope>TISSUE SPECIFICITY</scope>
</reference>
<feature type="chain" id="PRO_0000269752" description="Transcriptional adapter ADA2">
    <location>
        <begin position="1"/>
        <end position="567"/>
    </location>
</feature>
<feature type="domain" description="SANT" evidence="4">
    <location>
        <begin position="106"/>
        <end position="158"/>
    </location>
</feature>
<feature type="domain" description="SWIRM">
    <location>
        <begin position="476"/>
        <end position="567"/>
    </location>
</feature>
<feature type="zinc finger region" description="ZZ-type" evidence="3">
    <location>
        <begin position="48"/>
        <end position="104"/>
    </location>
</feature>
<feature type="region of interest" description="Disordered" evidence="5">
    <location>
        <begin position="1"/>
        <end position="34"/>
    </location>
</feature>
<feature type="region of interest" description="Disordered" evidence="5">
    <location>
        <begin position="444"/>
        <end position="480"/>
    </location>
</feature>
<feature type="coiled-coil region" evidence="2">
    <location>
        <begin position="288"/>
        <end position="308"/>
    </location>
</feature>
<feature type="coiled-coil region" evidence="2">
    <location>
        <begin position="405"/>
        <end position="429"/>
    </location>
</feature>
<feature type="compositionally biased region" description="Basic and acidic residues" evidence="5">
    <location>
        <begin position="446"/>
        <end position="458"/>
    </location>
</feature>
<feature type="binding site" evidence="3">
    <location>
        <position position="53"/>
    </location>
    <ligand>
        <name>Zn(2+)</name>
        <dbReference type="ChEBI" id="CHEBI:29105"/>
        <label>1</label>
    </ligand>
</feature>
<feature type="binding site" evidence="3">
    <location>
        <position position="56"/>
    </location>
    <ligand>
        <name>Zn(2+)</name>
        <dbReference type="ChEBI" id="CHEBI:29105"/>
        <label>1</label>
    </ligand>
</feature>
<feature type="binding site" evidence="3">
    <location>
        <position position="68"/>
    </location>
    <ligand>
        <name>Zn(2+)</name>
        <dbReference type="ChEBI" id="CHEBI:29105"/>
        <label>2</label>
    </ligand>
</feature>
<feature type="binding site" evidence="3">
    <location>
        <position position="71"/>
    </location>
    <ligand>
        <name>Zn(2+)</name>
        <dbReference type="ChEBI" id="CHEBI:29105"/>
        <label>2</label>
    </ligand>
</feature>
<feature type="binding site" evidence="3">
    <location>
        <position position="77"/>
    </location>
    <ligand>
        <name>Zn(2+)</name>
        <dbReference type="ChEBI" id="CHEBI:29105"/>
        <label>1</label>
    </ligand>
</feature>
<feature type="binding site" evidence="3">
    <location>
        <position position="80"/>
    </location>
    <ligand>
        <name>Zn(2+)</name>
        <dbReference type="ChEBI" id="CHEBI:29105"/>
        <label>1</label>
    </ligand>
</feature>
<feature type="binding site" evidence="3">
    <location>
        <position position="90"/>
    </location>
    <ligand>
        <name>Zn(2+)</name>
        <dbReference type="ChEBI" id="CHEBI:29105"/>
        <label>2</label>
    </ligand>
</feature>
<feature type="binding site" evidence="3">
    <location>
        <position position="94"/>
    </location>
    <ligand>
        <name>Zn(2+)</name>
        <dbReference type="ChEBI" id="CHEBI:29105"/>
        <label>2</label>
    </ligand>
</feature>